<accession>P97783</accession>
<organism>
    <name type="scientific">Mus musculus</name>
    <name type="common">Mouse</name>
    <dbReference type="NCBI Taxonomy" id="10090"/>
    <lineage>
        <taxon>Eukaryota</taxon>
        <taxon>Metazoa</taxon>
        <taxon>Chordata</taxon>
        <taxon>Craniata</taxon>
        <taxon>Vertebrata</taxon>
        <taxon>Euteleostomi</taxon>
        <taxon>Mammalia</taxon>
        <taxon>Eutheria</taxon>
        <taxon>Euarchontoglires</taxon>
        <taxon>Glires</taxon>
        <taxon>Rodentia</taxon>
        <taxon>Myomorpha</taxon>
        <taxon>Muroidea</taxon>
        <taxon>Muridae</taxon>
        <taxon>Murinae</taxon>
        <taxon>Mus</taxon>
        <taxon>Mus</taxon>
    </lineage>
</organism>
<proteinExistence type="evidence at protein level"/>
<feature type="chain" id="PRO_0000064472" description="Protein AF1q">
    <location>
        <begin position="1"/>
        <end position="90"/>
    </location>
</feature>
<feature type="region of interest" description="Disordered" evidence="2">
    <location>
        <begin position="31"/>
        <end position="64"/>
    </location>
</feature>
<feature type="short sequence motif" description="Nuclear export signal" evidence="1">
    <location>
        <begin position="24"/>
        <end position="32"/>
    </location>
</feature>
<feature type="compositionally biased region" description="Polar residues" evidence="2">
    <location>
        <begin position="35"/>
        <end position="58"/>
    </location>
</feature>
<feature type="modified residue" description="Phosphoserine" evidence="5">
    <location>
        <position position="84"/>
    </location>
</feature>
<name>AF1Q_MOUSE</name>
<evidence type="ECO:0000250" key="1">
    <source>
        <dbReference type="UniProtKB" id="Q13015"/>
    </source>
</evidence>
<evidence type="ECO:0000256" key="2">
    <source>
        <dbReference type="SAM" id="MobiDB-lite"/>
    </source>
</evidence>
<evidence type="ECO:0000269" key="3">
    <source>
    </source>
</evidence>
<evidence type="ECO:0000305" key="4"/>
<evidence type="ECO:0007744" key="5">
    <source>
    </source>
</evidence>
<comment type="function">
    <text evidence="1">Cofactor for the transcription factor TCF7. Involved in regulation of lymphoid development by driving multipotent hematopoietic progenitor cells towards a T-cell fate.</text>
</comment>
<comment type="subunit">
    <text evidence="1">Interacts with HSPA8 and LAMP2 isoform A; the interaction may target MLLT11 for degradation via chaperone-mediated autophagy. Interacts with TCF7.</text>
</comment>
<comment type="subcellular location">
    <subcellularLocation>
        <location evidence="1">Nucleus</location>
    </subcellularLocation>
    <subcellularLocation>
        <location evidence="1">Cytoplasm</location>
    </subcellularLocation>
    <subcellularLocation>
        <location evidence="1">Cytoplasm</location>
        <location evidence="1">Cytoskeleton</location>
        <location evidence="1">Microtubule organizing center</location>
        <location evidence="1">Centrosome</location>
    </subcellularLocation>
    <text evidence="1">Continuous nuclear export is followed by degradation.</text>
</comment>
<comment type="tissue specificity">
    <text evidence="3">Detected in embryonic brain cortex.</text>
</comment>
<comment type="induction">
    <text evidence="3">Up-regulated during neuronal differentiation (in vitro).</text>
</comment>
<comment type="PTM">
    <text evidence="1">Ubiquitinated, leading to degradation.</text>
</comment>
<comment type="similarity">
    <text evidence="4">Belongs to the MLLT11 family.</text>
</comment>
<sequence>MRDPVSSQYSSFLFWRMPIPELDLSELEGLGLSDTPTYESKDSSSVGKMNGQASGTEQKNPEGDPLLEYSTFNFWRAPIASIHSVDLDLL</sequence>
<protein>
    <recommendedName>
        <fullName>Protein AF1q</fullName>
    </recommendedName>
</protein>
<reference key="1">
    <citation type="submission" date="1997-01" db="EMBL/GenBank/DDBJ databases">
        <title>Cloning of mouse AF1q homologue.</title>
        <authorList>
            <person name="Matsuo N."/>
            <person name="Kawamoto S."/>
            <person name="Okubo K."/>
            <person name="Matsubara K."/>
        </authorList>
    </citation>
    <scope>NUCLEOTIDE SEQUENCE [MRNA]</scope>
    <source>
        <strain>C57BL/6J</strain>
        <tissue>Hippocampus</tissue>
    </source>
</reference>
<reference key="2">
    <citation type="submission" date="1997-03" db="EMBL/GenBank/DDBJ databases">
        <title>AF1q in fetal mouse brain.</title>
        <authorList>
            <person name="Koduru P.K."/>
            <person name="Tse W."/>
            <person name="Liu J."/>
            <person name="Broome J.D."/>
        </authorList>
    </citation>
    <scope>NUCLEOTIDE SEQUENCE [MRNA]</scope>
    <source>
        <tissue>Brain</tissue>
    </source>
</reference>
<reference key="3">
    <citation type="journal article" date="2004" name="Genome Res.">
        <title>The status, quality, and expansion of the NIH full-length cDNA project: the Mammalian Gene Collection (MGC).</title>
        <authorList>
            <consortium name="The MGC Project Team"/>
        </authorList>
    </citation>
    <scope>NUCLEOTIDE SEQUENCE [LARGE SCALE MRNA]</scope>
    <source>
        <strain>C57BL/6J</strain>
        <tissue>Retina</tissue>
    </source>
</reference>
<reference key="4">
    <citation type="journal article" date="2004" name="Brain Res. Mol. Brain Res.">
        <title>AF1q, a differentially expressed gene during neuronal differentiation, transforms HEK cells into neuron-like cells.</title>
        <authorList>
            <person name="Lin H.J."/>
            <person name="Shaffer K.M."/>
            <person name="Sun Z."/>
            <person name="Jay G."/>
            <person name="He W.-W."/>
            <person name="Ma W."/>
        </authorList>
    </citation>
    <scope>TISSUE SPECIFICITY</scope>
    <scope>INDUCTION</scope>
</reference>
<reference key="5">
    <citation type="journal article" date="2010" name="Cell">
        <title>A tissue-specific atlas of mouse protein phosphorylation and expression.</title>
        <authorList>
            <person name="Huttlin E.L."/>
            <person name="Jedrychowski M.P."/>
            <person name="Elias J.E."/>
            <person name="Goswami T."/>
            <person name="Rad R."/>
            <person name="Beausoleil S.A."/>
            <person name="Villen J."/>
            <person name="Haas W."/>
            <person name="Sowa M.E."/>
            <person name="Gygi S.P."/>
        </authorList>
    </citation>
    <scope>PHOSPHORYLATION [LARGE SCALE ANALYSIS] AT SER-84</scope>
    <scope>IDENTIFICATION BY MASS SPECTROMETRY [LARGE SCALE ANALYSIS]</scope>
    <source>
        <tissue>Brain</tissue>
        <tissue>Testis</tissue>
    </source>
</reference>
<keyword id="KW-0963">Cytoplasm</keyword>
<keyword id="KW-0206">Cytoskeleton</keyword>
<keyword id="KW-0539">Nucleus</keyword>
<keyword id="KW-0597">Phosphoprotein</keyword>
<keyword id="KW-1185">Reference proteome</keyword>
<keyword id="KW-0832">Ubl conjugation</keyword>
<dbReference type="EMBL" id="AB000733">
    <property type="protein sequence ID" value="BAA19173.1"/>
    <property type="molecule type" value="mRNA"/>
</dbReference>
<dbReference type="EMBL" id="U95498">
    <property type="protein sequence ID" value="AAD00803.1"/>
    <property type="molecule type" value="mRNA"/>
</dbReference>
<dbReference type="EMBL" id="BC022963">
    <property type="protein sequence ID" value="AAH22963.1"/>
    <property type="molecule type" value="mRNA"/>
</dbReference>
<dbReference type="CCDS" id="CCDS38544.1"/>
<dbReference type="RefSeq" id="NP_001398019.1">
    <property type="nucleotide sequence ID" value="NM_001411090.1"/>
</dbReference>
<dbReference type="RefSeq" id="NP_001398020.1">
    <property type="nucleotide sequence ID" value="NM_001411091.1"/>
</dbReference>
<dbReference type="RefSeq" id="NP_001398021.1">
    <property type="nucleotide sequence ID" value="NM_001411092.1"/>
</dbReference>
<dbReference type="RefSeq" id="NP_064298.1">
    <property type="nucleotide sequence ID" value="NM_019914.5"/>
</dbReference>
<dbReference type="RefSeq" id="XP_006501863.1">
    <property type="nucleotide sequence ID" value="XM_006501800.3"/>
</dbReference>
<dbReference type="RefSeq" id="XP_017175158.1">
    <property type="nucleotide sequence ID" value="XM_017319669.1"/>
</dbReference>
<dbReference type="RefSeq" id="XP_017175159.1">
    <property type="nucleotide sequence ID" value="XM_017319670.1"/>
</dbReference>
<dbReference type="RefSeq" id="XP_017175160.1">
    <property type="nucleotide sequence ID" value="XM_017319671.1"/>
</dbReference>
<dbReference type="SMR" id="P97783"/>
<dbReference type="BioGRID" id="208168">
    <property type="interactions" value="1"/>
</dbReference>
<dbReference type="FunCoup" id="P97783">
    <property type="interactions" value="1290"/>
</dbReference>
<dbReference type="STRING" id="10090.ENSMUSP00000066448"/>
<dbReference type="iPTMnet" id="P97783"/>
<dbReference type="PhosphoSitePlus" id="P97783"/>
<dbReference type="PaxDb" id="10090-ENSMUSP00000066448"/>
<dbReference type="PeptideAtlas" id="P97783"/>
<dbReference type="ProteomicsDB" id="281947"/>
<dbReference type="Pumba" id="P97783"/>
<dbReference type="Antibodypedia" id="34047">
    <property type="antibodies" value="116 antibodies from 22 providers"/>
</dbReference>
<dbReference type="DNASU" id="56772"/>
<dbReference type="Ensembl" id="ENSMUST00000065482.6">
    <property type="protein sequence ID" value="ENSMUSP00000066448.6"/>
    <property type="gene ID" value="ENSMUSG00000053192.10"/>
</dbReference>
<dbReference type="Ensembl" id="ENSMUST00000196025.5">
    <property type="protein sequence ID" value="ENSMUSP00000143755.2"/>
    <property type="gene ID" value="ENSMUSG00000053192.10"/>
</dbReference>
<dbReference type="Ensembl" id="ENSMUST00000198948.5">
    <property type="protein sequence ID" value="ENSMUSP00000142604.2"/>
    <property type="gene ID" value="ENSMUSG00000053192.10"/>
</dbReference>
<dbReference type="GeneID" id="56772"/>
<dbReference type="KEGG" id="mmu:56772"/>
<dbReference type="UCSC" id="uc008qit.2">
    <property type="organism name" value="mouse"/>
</dbReference>
<dbReference type="AGR" id="MGI:1929671"/>
<dbReference type="CTD" id="10962"/>
<dbReference type="MGI" id="MGI:1929671">
    <property type="gene designation" value="Mllt11"/>
</dbReference>
<dbReference type="VEuPathDB" id="HostDB:ENSMUSG00000053192"/>
<dbReference type="eggNOG" id="ENOG502S7MB">
    <property type="taxonomic scope" value="Eukaryota"/>
</dbReference>
<dbReference type="GeneTree" id="ENSGT00390000009895"/>
<dbReference type="HOGENOM" id="CLU_2440320_0_0_1"/>
<dbReference type="InParanoid" id="P97783"/>
<dbReference type="OMA" id="RISPVDF"/>
<dbReference type="OrthoDB" id="9991950at2759"/>
<dbReference type="PhylomeDB" id="P97783"/>
<dbReference type="TreeFam" id="TF336906"/>
<dbReference type="BioGRID-ORCS" id="56772">
    <property type="hits" value="1 hit in 79 CRISPR screens"/>
</dbReference>
<dbReference type="ChiTaRS" id="Mllt11">
    <property type="organism name" value="mouse"/>
</dbReference>
<dbReference type="PRO" id="PR:P97783"/>
<dbReference type="Proteomes" id="UP000000589">
    <property type="component" value="Chromosome 3"/>
</dbReference>
<dbReference type="RNAct" id="P97783">
    <property type="molecule type" value="protein"/>
</dbReference>
<dbReference type="Bgee" id="ENSMUSG00000053192">
    <property type="expression patterns" value="Expressed in embryonic brain and 277 other cell types or tissues"/>
</dbReference>
<dbReference type="ExpressionAtlas" id="P97783">
    <property type="expression patterns" value="baseline and differential"/>
</dbReference>
<dbReference type="GO" id="GO:0005813">
    <property type="term" value="C:centrosome"/>
    <property type="evidence" value="ECO:0007669"/>
    <property type="project" value="UniProtKB-SubCell"/>
</dbReference>
<dbReference type="GO" id="GO:0005737">
    <property type="term" value="C:cytoplasm"/>
    <property type="evidence" value="ECO:0000314"/>
    <property type="project" value="MGI"/>
</dbReference>
<dbReference type="GO" id="GO:0005829">
    <property type="term" value="C:cytosol"/>
    <property type="evidence" value="ECO:0007669"/>
    <property type="project" value="Ensembl"/>
</dbReference>
<dbReference type="GO" id="GO:0005654">
    <property type="term" value="C:nucleoplasm"/>
    <property type="evidence" value="ECO:0007669"/>
    <property type="project" value="Ensembl"/>
</dbReference>
<dbReference type="GO" id="GO:0097191">
    <property type="term" value="P:extrinsic apoptotic signaling pathway"/>
    <property type="evidence" value="ECO:0000250"/>
    <property type="project" value="UniProtKB"/>
</dbReference>
<dbReference type="GO" id="GO:0097193">
    <property type="term" value="P:intrinsic apoptotic signaling pathway"/>
    <property type="evidence" value="ECO:0000250"/>
    <property type="project" value="UniProtKB"/>
</dbReference>
<dbReference type="GO" id="GO:0043065">
    <property type="term" value="P:positive regulation of apoptotic process"/>
    <property type="evidence" value="ECO:0000250"/>
    <property type="project" value="UniProtKB"/>
</dbReference>
<dbReference type="GO" id="GO:0045893">
    <property type="term" value="P:positive regulation of DNA-templated transcription"/>
    <property type="evidence" value="ECO:0000250"/>
    <property type="project" value="UniProtKB"/>
</dbReference>
<dbReference type="GO" id="GO:0051901">
    <property type="term" value="P:positive regulation of mitochondrial depolarization"/>
    <property type="evidence" value="ECO:0000250"/>
    <property type="project" value="UniProtKB"/>
</dbReference>
<dbReference type="GO" id="GO:0090200">
    <property type="term" value="P:positive regulation of release of cytochrome c from mitochondria"/>
    <property type="evidence" value="ECO:0000250"/>
    <property type="project" value="UniProtKB"/>
</dbReference>
<dbReference type="InterPro" id="IPR026778">
    <property type="entry name" value="MLLT11_fam"/>
</dbReference>
<dbReference type="InterPro" id="IPR033461">
    <property type="entry name" value="WRNPLPNID"/>
</dbReference>
<dbReference type="PANTHER" id="PTHR15404">
    <property type="entry name" value="PROTEIN AF1Q"/>
    <property type="match status" value="1"/>
</dbReference>
<dbReference type="PANTHER" id="PTHR15404:SF2">
    <property type="entry name" value="PROTEIN AF1Q"/>
    <property type="match status" value="1"/>
</dbReference>
<dbReference type="Pfam" id="PF15017">
    <property type="entry name" value="WRNPLPNID"/>
    <property type="match status" value="1"/>
</dbReference>
<gene>
    <name type="primary">Mllt11</name>
    <name type="synonym">Af1q</name>
</gene>